<reference key="1">
    <citation type="journal article" date="1990" name="Biochem. Biophys. Res. Commun.">
        <title>Nucleotide sequence determination of mouse, chicken and Xenopus laevis rig cDNAs: the rig-encoded protein is extremely conserved during vertebrate evolution.</title>
        <authorList>
            <person name="Sugawara A."/>
            <person name="Nata K."/>
            <person name="Inoue C."/>
            <person name="Takasawa S."/>
            <person name="Yamamoto H."/>
            <person name="Okamoto H."/>
        </authorList>
    </citation>
    <scope>NUCLEOTIDE SEQUENCE [MRNA]</scope>
</reference>
<reference key="2">
    <citation type="journal article" date="1991" name="Gene">
        <title>Sequence of the chicken rig gene encoding ribosomal protein S15.</title>
        <authorList>
            <person name="Sugawara A."/>
            <person name="Shiga K."/>
            <person name="Takasawa S."/>
            <person name="Yonekura H."/>
            <person name="Yamamoto H."/>
            <person name="Okamoto H."/>
        </authorList>
    </citation>
    <scope>NUCLEOTIDE SEQUENCE [GENOMIC DNA]</scope>
</reference>
<name>RS15_CHICK</name>
<accession>P62846</accession>
<accession>P11174</accession>
<proteinExistence type="evidence at protein level"/>
<organism>
    <name type="scientific">Gallus gallus</name>
    <name type="common">Chicken</name>
    <dbReference type="NCBI Taxonomy" id="9031"/>
    <lineage>
        <taxon>Eukaryota</taxon>
        <taxon>Metazoa</taxon>
        <taxon>Chordata</taxon>
        <taxon>Craniata</taxon>
        <taxon>Vertebrata</taxon>
        <taxon>Euteleostomi</taxon>
        <taxon>Archelosauria</taxon>
        <taxon>Archosauria</taxon>
        <taxon>Dinosauria</taxon>
        <taxon>Saurischia</taxon>
        <taxon>Theropoda</taxon>
        <taxon>Coelurosauria</taxon>
        <taxon>Aves</taxon>
        <taxon>Neognathae</taxon>
        <taxon>Galloanserae</taxon>
        <taxon>Galliformes</taxon>
        <taxon>Phasianidae</taxon>
        <taxon>Phasianinae</taxon>
        <taxon>Gallus</taxon>
    </lineage>
</organism>
<feature type="initiator methionine" description="Removed" evidence="1">
    <location>
        <position position="1"/>
    </location>
</feature>
<feature type="chain" id="PRO_0000130033" description="Small ribosomal subunit protein uS19">
    <location>
        <begin position="2"/>
        <end position="145"/>
    </location>
</feature>
<feature type="modified residue" description="N-acetylalanine" evidence="1">
    <location>
        <position position="2"/>
    </location>
</feature>
<evidence type="ECO:0000250" key="1"/>
<evidence type="ECO:0000250" key="2">
    <source>
        <dbReference type="UniProtKB" id="P62841"/>
    </source>
</evidence>
<evidence type="ECO:0000305" key="3"/>
<comment type="function">
    <text evidence="2">Component of the small ribosomal subunit. The ribosome is a large ribonucleoprotein complex responsible for the synthesis of proteins in the cell.</text>
</comment>
<comment type="subunit">
    <text evidence="2">Component of the small ribosomal subunit.</text>
</comment>
<comment type="subcellular location">
    <subcellularLocation>
        <location evidence="2">Cytoplasm</location>
    </subcellularLocation>
</comment>
<comment type="similarity">
    <text evidence="3">Belongs to the universal ribosomal protein uS19 family.</text>
</comment>
<dbReference type="EMBL" id="M33331">
    <property type="protein sequence ID" value="AAA49057.1"/>
    <property type="molecule type" value="mRNA"/>
</dbReference>
<dbReference type="EMBL" id="D10167">
    <property type="protein sequence ID" value="BAA01036.1"/>
    <property type="molecule type" value="Genomic_DNA"/>
</dbReference>
<dbReference type="PIR" id="JH0510">
    <property type="entry name" value="B34823"/>
</dbReference>
<dbReference type="RefSeq" id="NP_990793.1">
    <property type="nucleotide sequence ID" value="NM_205462.2"/>
</dbReference>
<dbReference type="PDB" id="8Q7Z">
    <property type="method" value="EM"/>
    <property type="resolution" value="2.50 A"/>
    <property type="chains" value="Ao=1-145"/>
</dbReference>
<dbReference type="PDB" id="8Q87">
    <property type="method" value="EM"/>
    <property type="resolution" value="2.40 A"/>
    <property type="chains" value="Ao=1-145"/>
</dbReference>
<dbReference type="PDBsum" id="8Q7Z"/>
<dbReference type="PDBsum" id="8Q87"/>
<dbReference type="SMR" id="P62846"/>
<dbReference type="FunCoup" id="P62846">
    <property type="interactions" value="2274"/>
</dbReference>
<dbReference type="STRING" id="9031.ENSGALP00000053261"/>
<dbReference type="PaxDb" id="9031-ENSGALP00000024468"/>
<dbReference type="Ensembl" id="ENSGALT00010067977.1">
    <property type="protein sequence ID" value="ENSGALP00010041720.1"/>
    <property type="gene ID" value="ENSGALG00010028054.1"/>
</dbReference>
<dbReference type="GeneID" id="396448"/>
<dbReference type="KEGG" id="gga:396448"/>
<dbReference type="CTD" id="6209"/>
<dbReference type="VEuPathDB" id="HostDB:geneid_396448"/>
<dbReference type="eggNOG" id="KOG0898">
    <property type="taxonomic scope" value="Eukaryota"/>
</dbReference>
<dbReference type="GeneTree" id="ENSGT00390000000475"/>
<dbReference type="HOGENOM" id="CLU_097347_1_0_1"/>
<dbReference type="InParanoid" id="P62846"/>
<dbReference type="OMA" id="KTHCRDM"/>
<dbReference type="OrthoDB" id="10258210at2759"/>
<dbReference type="PhylomeDB" id="P62846"/>
<dbReference type="Reactome" id="R-GGA-1799339">
    <property type="pathway name" value="SRP-dependent cotranslational protein targeting to membrane"/>
</dbReference>
<dbReference type="Reactome" id="R-GGA-72649">
    <property type="pathway name" value="Translation initiation complex formation"/>
</dbReference>
<dbReference type="Reactome" id="R-GGA-72689">
    <property type="pathway name" value="Formation of a pool of free 40S subunits"/>
</dbReference>
<dbReference type="Reactome" id="R-GGA-72695">
    <property type="pathway name" value="Formation of the ternary complex, and subsequently, the 43S complex"/>
</dbReference>
<dbReference type="Reactome" id="R-GGA-72702">
    <property type="pathway name" value="Ribosomal scanning and start codon recognition"/>
</dbReference>
<dbReference type="Reactome" id="R-GGA-72706">
    <property type="pathway name" value="GTP hydrolysis and joining of the 60S ribosomal subunit"/>
</dbReference>
<dbReference type="Reactome" id="R-GGA-975956">
    <property type="pathway name" value="Nonsense Mediated Decay (NMD) independent of the Exon Junction Complex (EJC)"/>
</dbReference>
<dbReference type="Reactome" id="R-GGA-975957">
    <property type="pathway name" value="Nonsense Mediated Decay (NMD) enhanced by the Exon Junction Complex (EJC)"/>
</dbReference>
<dbReference type="PRO" id="PR:P62846"/>
<dbReference type="Proteomes" id="UP000000539">
    <property type="component" value="Chromosome 28"/>
</dbReference>
<dbReference type="Bgee" id="ENSGALG00000015195">
    <property type="expression patterns" value="Expressed in granulocyte and 12 other cell types or tissues"/>
</dbReference>
<dbReference type="GO" id="GO:0022627">
    <property type="term" value="C:cytosolic small ribosomal subunit"/>
    <property type="evidence" value="ECO:0000250"/>
    <property type="project" value="AgBase"/>
</dbReference>
<dbReference type="GO" id="GO:0003723">
    <property type="term" value="F:RNA binding"/>
    <property type="evidence" value="ECO:0007669"/>
    <property type="project" value="InterPro"/>
</dbReference>
<dbReference type="GO" id="GO:0003735">
    <property type="term" value="F:structural constituent of ribosome"/>
    <property type="evidence" value="ECO:0000318"/>
    <property type="project" value="GO_Central"/>
</dbReference>
<dbReference type="GO" id="GO:0000028">
    <property type="term" value="P:ribosomal small subunit assembly"/>
    <property type="evidence" value="ECO:0000318"/>
    <property type="project" value="GO_Central"/>
</dbReference>
<dbReference type="GO" id="GO:0006412">
    <property type="term" value="P:translation"/>
    <property type="evidence" value="ECO:0007669"/>
    <property type="project" value="InterPro"/>
</dbReference>
<dbReference type="FunFam" id="3.30.860.10:FF:000002">
    <property type="entry name" value="40S ribosomal protein S15"/>
    <property type="match status" value="1"/>
</dbReference>
<dbReference type="Gene3D" id="3.30.860.10">
    <property type="entry name" value="30s Ribosomal Protein S19, Chain A"/>
    <property type="match status" value="1"/>
</dbReference>
<dbReference type="HAMAP" id="MF_00531">
    <property type="entry name" value="Ribosomal_uS19"/>
    <property type="match status" value="1"/>
</dbReference>
<dbReference type="InterPro" id="IPR002222">
    <property type="entry name" value="Ribosomal_uS19"/>
</dbReference>
<dbReference type="InterPro" id="IPR020934">
    <property type="entry name" value="Ribosomal_uS19_CS"/>
</dbReference>
<dbReference type="InterPro" id="IPR005713">
    <property type="entry name" value="Ribosomal_uS19_euk/arc"/>
</dbReference>
<dbReference type="InterPro" id="IPR023575">
    <property type="entry name" value="Ribosomal_uS19_SF"/>
</dbReference>
<dbReference type="NCBIfam" id="NF003121">
    <property type="entry name" value="PRK04038.1"/>
    <property type="match status" value="1"/>
</dbReference>
<dbReference type="NCBIfam" id="TIGR01025">
    <property type="entry name" value="uS19_arch"/>
    <property type="match status" value="1"/>
</dbReference>
<dbReference type="PANTHER" id="PTHR11880">
    <property type="entry name" value="RIBOSOMAL PROTEIN S19P FAMILY MEMBER"/>
    <property type="match status" value="1"/>
</dbReference>
<dbReference type="PANTHER" id="PTHR11880:SF2">
    <property type="entry name" value="SMALL RIBOSOMAL SUBUNIT PROTEIN US19"/>
    <property type="match status" value="1"/>
</dbReference>
<dbReference type="Pfam" id="PF00203">
    <property type="entry name" value="Ribosomal_S19"/>
    <property type="match status" value="1"/>
</dbReference>
<dbReference type="PIRSF" id="PIRSF002144">
    <property type="entry name" value="Ribosomal_S19"/>
    <property type="match status" value="1"/>
</dbReference>
<dbReference type="PRINTS" id="PR00975">
    <property type="entry name" value="RIBOSOMALS19"/>
</dbReference>
<dbReference type="SUPFAM" id="SSF54570">
    <property type="entry name" value="Ribosomal protein S19"/>
    <property type="match status" value="1"/>
</dbReference>
<dbReference type="PROSITE" id="PS00323">
    <property type="entry name" value="RIBOSOMAL_S19"/>
    <property type="match status" value="1"/>
</dbReference>
<sequence>MAEVEQKKKRTFRKFTYRGVDLDQLLDMSYEQLMQLYSARQRRRLNRGLRRKQHSLLKRLRKAKKEAPPMEKPEVVKTHLRDMIILPEMVGSMVGVYNGKTFNQVEIKPEMIGHYLGEFSITYKPVKHGRPGIGATHSSRFIPLK</sequence>
<protein>
    <recommendedName>
        <fullName evidence="3">Small ribosomal subunit protein uS19</fullName>
    </recommendedName>
    <alternativeName>
        <fullName>40S ribosomal protein S15</fullName>
    </alternativeName>
    <alternativeName>
        <fullName>RIG protein</fullName>
    </alternativeName>
</protein>
<gene>
    <name type="primary">RPS15</name>
    <name type="synonym">RIG</name>
</gene>
<keyword id="KW-0002">3D-structure</keyword>
<keyword id="KW-0007">Acetylation</keyword>
<keyword id="KW-0963">Cytoplasm</keyword>
<keyword id="KW-1185">Reference proteome</keyword>
<keyword id="KW-0687">Ribonucleoprotein</keyword>
<keyword id="KW-0689">Ribosomal protein</keyword>